<accession>Q2S937</accession>
<reference key="1">
    <citation type="journal article" date="2005" name="Nucleic Acids Res.">
        <title>Genomic blueprint of Hahella chejuensis, a marine microbe producing an algicidal agent.</title>
        <authorList>
            <person name="Jeong H."/>
            <person name="Yim J.H."/>
            <person name="Lee C."/>
            <person name="Choi S.-H."/>
            <person name="Park Y.K."/>
            <person name="Yoon S.H."/>
            <person name="Hur C.-G."/>
            <person name="Kang H.-Y."/>
            <person name="Kim D."/>
            <person name="Lee H.H."/>
            <person name="Park K.H."/>
            <person name="Park S.-H."/>
            <person name="Park H.-S."/>
            <person name="Lee H.K."/>
            <person name="Oh T.K."/>
            <person name="Kim J.F."/>
        </authorList>
    </citation>
    <scope>NUCLEOTIDE SEQUENCE [LARGE SCALE GENOMIC DNA]</scope>
    <source>
        <strain>KCTC 2396</strain>
    </source>
</reference>
<sequence>MQRSLNEFLTPRTIEVNQINATHAKVTLEPLERGFGHTLGSALRRILLSSMPGCAVVEVEIDGVLHEYSTVEGVQEDVIEILLNLKNLAIKMHNRDEATLSLNKKGAGPVLASDIQLDHDVEIANPDMVICNLNSNGDVKMKLKVARGRGYEPADQRNSADDETRAIGRLQLDSSFSPVLRVAYNVESARVEQRTDLDKLVIDLETNGTIDPEEAIRRAATILQQQLAVFVDFDQQNEPEKVEEQEEIDPILLRPVDDLELTVRSANCLKAENIYYIGDLIQRTEVELLKTPNLGKKSLTEIKDVLASRGLSLGMRLENWPPASIRGDDRVLGG</sequence>
<name>RPOA_HAHCH</name>
<organism>
    <name type="scientific">Hahella chejuensis (strain KCTC 2396)</name>
    <dbReference type="NCBI Taxonomy" id="349521"/>
    <lineage>
        <taxon>Bacteria</taxon>
        <taxon>Pseudomonadati</taxon>
        <taxon>Pseudomonadota</taxon>
        <taxon>Gammaproteobacteria</taxon>
        <taxon>Oceanospirillales</taxon>
        <taxon>Hahellaceae</taxon>
        <taxon>Hahella</taxon>
    </lineage>
</organism>
<keyword id="KW-0240">DNA-directed RNA polymerase</keyword>
<keyword id="KW-0548">Nucleotidyltransferase</keyword>
<keyword id="KW-1185">Reference proteome</keyword>
<keyword id="KW-0804">Transcription</keyword>
<keyword id="KW-0808">Transferase</keyword>
<dbReference type="EC" id="2.7.7.6" evidence="1"/>
<dbReference type="EMBL" id="CP000155">
    <property type="protein sequence ID" value="ABC32837.1"/>
    <property type="molecule type" value="Genomic_DNA"/>
</dbReference>
<dbReference type="RefSeq" id="WP_011399895.1">
    <property type="nucleotide sequence ID" value="NC_007645.1"/>
</dbReference>
<dbReference type="SMR" id="Q2S937"/>
<dbReference type="STRING" id="349521.HCH_06193"/>
<dbReference type="KEGG" id="hch:HCH_06193"/>
<dbReference type="eggNOG" id="COG0202">
    <property type="taxonomic scope" value="Bacteria"/>
</dbReference>
<dbReference type="HOGENOM" id="CLU_053084_0_1_6"/>
<dbReference type="OrthoDB" id="9805706at2"/>
<dbReference type="Proteomes" id="UP000000238">
    <property type="component" value="Chromosome"/>
</dbReference>
<dbReference type="GO" id="GO:0005737">
    <property type="term" value="C:cytoplasm"/>
    <property type="evidence" value="ECO:0007669"/>
    <property type="project" value="UniProtKB-ARBA"/>
</dbReference>
<dbReference type="GO" id="GO:0000428">
    <property type="term" value="C:DNA-directed RNA polymerase complex"/>
    <property type="evidence" value="ECO:0007669"/>
    <property type="project" value="UniProtKB-KW"/>
</dbReference>
<dbReference type="GO" id="GO:0003677">
    <property type="term" value="F:DNA binding"/>
    <property type="evidence" value="ECO:0007669"/>
    <property type="project" value="UniProtKB-UniRule"/>
</dbReference>
<dbReference type="GO" id="GO:0003899">
    <property type="term" value="F:DNA-directed RNA polymerase activity"/>
    <property type="evidence" value="ECO:0007669"/>
    <property type="project" value="UniProtKB-UniRule"/>
</dbReference>
<dbReference type="GO" id="GO:0046983">
    <property type="term" value="F:protein dimerization activity"/>
    <property type="evidence" value="ECO:0007669"/>
    <property type="project" value="InterPro"/>
</dbReference>
<dbReference type="GO" id="GO:0006351">
    <property type="term" value="P:DNA-templated transcription"/>
    <property type="evidence" value="ECO:0007669"/>
    <property type="project" value="UniProtKB-UniRule"/>
</dbReference>
<dbReference type="CDD" id="cd06928">
    <property type="entry name" value="RNAP_alpha_NTD"/>
    <property type="match status" value="1"/>
</dbReference>
<dbReference type="FunFam" id="1.10.150.20:FF:000001">
    <property type="entry name" value="DNA-directed RNA polymerase subunit alpha"/>
    <property type="match status" value="1"/>
</dbReference>
<dbReference type="FunFam" id="2.170.120.12:FF:000001">
    <property type="entry name" value="DNA-directed RNA polymerase subunit alpha"/>
    <property type="match status" value="1"/>
</dbReference>
<dbReference type="Gene3D" id="1.10.150.20">
    <property type="entry name" value="5' to 3' exonuclease, C-terminal subdomain"/>
    <property type="match status" value="1"/>
</dbReference>
<dbReference type="Gene3D" id="2.170.120.12">
    <property type="entry name" value="DNA-directed RNA polymerase, insert domain"/>
    <property type="match status" value="1"/>
</dbReference>
<dbReference type="Gene3D" id="3.30.1360.10">
    <property type="entry name" value="RNA polymerase, RBP11-like subunit"/>
    <property type="match status" value="1"/>
</dbReference>
<dbReference type="HAMAP" id="MF_00059">
    <property type="entry name" value="RNApol_bact_RpoA"/>
    <property type="match status" value="1"/>
</dbReference>
<dbReference type="InterPro" id="IPR011262">
    <property type="entry name" value="DNA-dir_RNA_pol_insert"/>
</dbReference>
<dbReference type="InterPro" id="IPR011263">
    <property type="entry name" value="DNA-dir_RNA_pol_RpoA/D/Rpb3"/>
</dbReference>
<dbReference type="InterPro" id="IPR011773">
    <property type="entry name" value="DNA-dir_RpoA"/>
</dbReference>
<dbReference type="InterPro" id="IPR036603">
    <property type="entry name" value="RBP11-like"/>
</dbReference>
<dbReference type="InterPro" id="IPR011260">
    <property type="entry name" value="RNAP_asu_C"/>
</dbReference>
<dbReference type="InterPro" id="IPR036643">
    <property type="entry name" value="RNApol_insert_sf"/>
</dbReference>
<dbReference type="NCBIfam" id="NF003513">
    <property type="entry name" value="PRK05182.1-2"/>
    <property type="match status" value="1"/>
</dbReference>
<dbReference type="NCBIfam" id="NF003519">
    <property type="entry name" value="PRK05182.2-5"/>
    <property type="match status" value="1"/>
</dbReference>
<dbReference type="NCBIfam" id="TIGR02027">
    <property type="entry name" value="rpoA"/>
    <property type="match status" value="1"/>
</dbReference>
<dbReference type="Pfam" id="PF01000">
    <property type="entry name" value="RNA_pol_A_bac"/>
    <property type="match status" value="1"/>
</dbReference>
<dbReference type="Pfam" id="PF03118">
    <property type="entry name" value="RNA_pol_A_CTD"/>
    <property type="match status" value="1"/>
</dbReference>
<dbReference type="Pfam" id="PF01193">
    <property type="entry name" value="RNA_pol_L"/>
    <property type="match status" value="1"/>
</dbReference>
<dbReference type="SMART" id="SM00662">
    <property type="entry name" value="RPOLD"/>
    <property type="match status" value="1"/>
</dbReference>
<dbReference type="SUPFAM" id="SSF47789">
    <property type="entry name" value="C-terminal domain of RNA polymerase alpha subunit"/>
    <property type="match status" value="1"/>
</dbReference>
<dbReference type="SUPFAM" id="SSF56553">
    <property type="entry name" value="Insert subdomain of RNA polymerase alpha subunit"/>
    <property type="match status" value="1"/>
</dbReference>
<dbReference type="SUPFAM" id="SSF55257">
    <property type="entry name" value="RBP11-like subunits of RNA polymerase"/>
    <property type="match status" value="1"/>
</dbReference>
<proteinExistence type="inferred from homology"/>
<gene>
    <name evidence="1" type="primary">rpoA</name>
    <name type="ordered locus">HCH_06193</name>
</gene>
<protein>
    <recommendedName>
        <fullName evidence="1">DNA-directed RNA polymerase subunit alpha</fullName>
        <shortName evidence="1">RNAP subunit alpha</shortName>
        <ecNumber evidence="1">2.7.7.6</ecNumber>
    </recommendedName>
    <alternativeName>
        <fullName evidence="1">RNA polymerase subunit alpha</fullName>
    </alternativeName>
    <alternativeName>
        <fullName evidence="1">Transcriptase subunit alpha</fullName>
    </alternativeName>
</protein>
<evidence type="ECO:0000255" key="1">
    <source>
        <dbReference type="HAMAP-Rule" id="MF_00059"/>
    </source>
</evidence>
<comment type="function">
    <text evidence="1">DNA-dependent RNA polymerase catalyzes the transcription of DNA into RNA using the four ribonucleoside triphosphates as substrates.</text>
</comment>
<comment type="catalytic activity">
    <reaction evidence="1">
        <text>RNA(n) + a ribonucleoside 5'-triphosphate = RNA(n+1) + diphosphate</text>
        <dbReference type="Rhea" id="RHEA:21248"/>
        <dbReference type="Rhea" id="RHEA-COMP:14527"/>
        <dbReference type="Rhea" id="RHEA-COMP:17342"/>
        <dbReference type="ChEBI" id="CHEBI:33019"/>
        <dbReference type="ChEBI" id="CHEBI:61557"/>
        <dbReference type="ChEBI" id="CHEBI:140395"/>
        <dbReference type="EC" id="2.7.7.6"/>
    </reaction>
</comment>
<comment type="subunit">
    <text evidence="1">Homodimer. The RNAP catalytic core consists of 2 alpha, 1 beta, 1 beta' and 1 omega subunit. When a sigma factor is associated with the core the holoenzyme is formed, which can initiate transcription.</text>
</comment>
<comment type="domain">
    <text evidence="1">The N-terminal domain is essential for RNAP assembly and basal transcription, whereas the C-terminal domain is involved in interaction with transcriptional regulators and with upstream promoter elements.</text>
</comment>
<comment type="similarity">
    <text evidence="1">Belongs to the RNA polymerase alpha chain family.</text>
</comment>
<feature type="chain" id="PRO_0000264505" description="DNA-directed RNA polymerase subunit alpha">
    <location>
        <begin position="1"/>
        <end position="334"/>
    </location>
</feature>
<feature type="region of interest" description="Alpha N-terminal domain (alpha-NTD)" evidence="1">
    <location>
        <begin position="1"/>
        <end position="234"/>
    </location>
</feature>
<feature type="region of interest" description="Alpha C-terminal domain (alpha-CTD)" evidence="1">
    <location>
        <begin position="248"/>
        <end position="334"/>
    </location>
</feature>